<keyword id="KW-0687">Ribonucleoprotein</keyword>
<keyword id="KW-0689">Ribosomal protein</keyword>
<keyword id="KW-0694">RNA-binding</keyword>
<keyword id="KW-0699">rRNA-binding</keyword>
<gene>
    <name evidence="1" type="primary">rplO</name>
    <name type="ordered locus">Mext_2182</name>
</gene>
<organism>
    <name type="scientific">Methylorubrum extorquens (strain PA1)</name>
    <name type="common">Methylobacterium extorquens</name>
    <dbReference type="NCBI Taxonomy" id="419610"/>
    <lineage>
        <taxon>Bacteria</taxon>
        <taxon>Pseudomonadati</taxon>
        <taxon>Pseudomonadota</taxon>
        <taxon>Alphaproteobacteria</taxon>
        <taxon>Hyphomicrobiales</taxon>
        <taxon>Methylobacteriaceae</taxon>
        <taxon>Methylorubrum</taxon>
    </lineage>
</organism>
<feature type="chain" id="PRO_1000142838" description="Large ribosomal subunit protein uL15">
    <location>
        <begin position="1"/>
        <end position="169"/>
    </location>
</feature>
<feature type="region of interest" description="Disordered" evidence="2">
    <location>
        <begin position="20"/>
        <end position="56"/>
    </location>
</feature>
<feature type="compositionally biased region" description="Gly residues" evidence="2">
    <location>
        <begin position="21"/>
        <end position="35"/>
    </location>
</feature>
<sequence length="169" mass="17394">MKLNEIRDNEGATKARMRVGRGIGSGKGKTGGRGVKGQKARSGVSIKGFEGGQMPLHRRLPKRGFNNIHAHDLNEVNLGRVQQAVDAGKLDANAAVTVEALVKAGIISRARDGVKLLGVGELTSKLSFEVTRASKSAIEAVEKAGGSVTTTFAAGVAHRGAAEGAVASA</sequence>
<reference key="1">
    <citation type="submission" date="2007-12" db="EMBL/GenBank/DDBJ databases">
        <title>Complete sequence of Methylobacterium extorquens PA1.</title>
        <authorList>
            <consortium name="US DOE Joint Genome Institute"/>
            <person name="Copeland A."/>
            <person name="Lucas S."/>
            <person name="Lapidus A."/>
            <person name="Barry K."/>
            <person name="Glavina del Rio T."/>
            <person name="Dalin E."/>
            <person name="Tice H."/>
            <person name="Pitluck S."/>
            <person name="Saunders E."/>
            <person name="Brettin T."/>
            <person name="Bruce D."/>
            <person name="Detter J.C."/>
            <person name="Han C."/>
            <person name="Schmutz J."/>
            <person name="Larimer F."/>
            <person name="Land M."/>
            <person name="Hauser L."/>
            <person name="Kyrpides N."/>
            <person name="Kim E."/>
            <person name="Marx C."/>
            <person name="Richardson P."/>
        </authorList>
    </citation>
    <scope>NUCLEOTIDE SEQUENCE [LARGE SCALE GENOMIC DNA]</scope>
    <source>
        <strain>PA1</strain>
    </source>
</reference>
<evidence type="ECO:0000255" key="1">
    <source>
        <dbReference type="HAMAP-Rule" id="MF_01341"/>
    </source>
</evidence>
<evidence type="ECO:0000256" key="2">
    <source>
        <dbReference type="SAM" id="MobiDB-lite"/>
    </source>
</evidence>
<evidence type="ECO:0000305" key="3"/>
<comment type="function">
    <text evidence="1">Binds to the 23S rRNA.</text>
</comment>
<comment type="subunit">
    <text evidence="1">Part of the 50S ribosomal subunit.</text>
</comment>
<comment type="similarity">
    <text evidence="1">Belongs to the universal ribosomal protein uL15 family.</text>
</comment>
<accession>A9W4S1</accession>
<name>RL15_METEP</name>
<dbReference type="EMBL" id="CP000908">
    <property type="protein sequence ID" value="ABY30577.1"/>
    <property type="molecule type" value="Genomic_DNA"/>
</dbReference>
<dbReference type="RefSeq" id="WP_012253650.1">
    <property type="nucleotide sequence ID" value="NC_010172.1"/>
</dbReference>
<dbReference type="SMR" id="A9W4S1"/>
<dbReference type="KEGG" id="mex:Mext_2182"/>
<dbReference type="eggNOG" id="COG0200">
    <property type="taxonomic scope" value="Bacteria"/>
</dbReference>
<dbReference type="HOGENOM" id="CLU_055188_4_0_5"/>
<dbReference type="BioCyc" id="MEXT419610:MEXT_RS11015-MONOMER"/>
<dbReference type="GO" id="GO:0022625">
    <property type="term" value="C:cytosolic large ribosomal subunit"/>
    <property type="evidence" value="ECO:0007669"/>
    <property type="project" value="TreeGrafter"/>
</dbReference>
<dbReference type="GO" id="GO:0019843">
    <property type="term" value="F:rRNA binding"/>
    <property type="evidence" value="ECO:0007669"/>
    <property type="project" value="UniProtKB-UniRule"/>
</dbReference>
<dbReference type="GO" id="GO:0003735">
    <property type="term" value="F:structural constituent of ribosome"/>
    <property type="evidence" value="ECO:0007669"/>
    <property type="project" value="InterPro"/>
</dbReference>
<dbReference type="GO" id="GO:0006412">
    <property type="term" value="P:translation"/>
    <property type="evidence" value="ECO:0007669"/>
    <property type="project" value="UniProtKB-UniRule"/>
</dbReference>
<dbReference type="Gene3D" id="3.100.10.10">
    <property type="match status" value="1"/>
</dbReference>
<dbReference type="HAMAP" id="MF_01341">
    <property type="entry name" value="Ribosomal_uL15"/>
    <property type="match status" value="1"/>
</dbReference>
<dbReference type="InterPro" id="IPR030878">
    <property type="entry name" value="Ribosomal_uL15"/>
</dbReference>
<dbReference type="InterPro" id="IPR021131">
    <property type="entry name" value="Ribosomal_uL15/eL18"/>
</dbReference>
<dbReference type="InterPro" id="IPR036227">
    <property type="entry name" value="Ribosomal_uL15/eL18_sf"/>
</dbReference>
<dbReference type="InterPro" id="IPR005749">
    <property type="entry name" value="Ribosomal_uL15_bac-type"/>
</dbReference>
<dbReference type="InterPro" id="IPR001196">
    <property type="entry name" value="Ribosomal_uL15_CS"/>
</dbReference>
<dbReference type="NCBIfam" id="TIGR01071">
    <property type="entry name" value="rplO_bact"/>
    <property type="match status" value="1"/>
</dbReference>
<dbReference type="PANTHER" id="PTHR12934">
    <property type="entry name" value="50S RIBOSOMAL PROTEIN L15"/>
    <property type="match status" value="1"/>
</dbReference>
<dbReference type="PANTHER" id="PTHR12934:SF11">
    <property type="entry name" value="LARGE RIBOSOMAL SUBUNIT PROTEIN UL15M"/>
    <property type="match status" value="1"/>
</dbReference>
<dbReference type="Pfam" id="PF00828">
    <property type="entry name" value="Ribosomal_L27A"/>
    <property type="match status" value="1"/>
</dbReference>
<dbReference type="SUPFAM" id="SSF52080">
    <property type="entry name" value="Ribosomal proteins L15p and L18e"/>
    <property type="match status" value="1"/>
</dbReference>
<dbReference type="PROSITE" id="PS00475">
    <property type="entry name" value="RIBOSOMAL_L15"/>
    <property type="match status" value="1"/>
</dbReference>
<proteinExistence type="inferred from homology"/>
<protein>
    <recommendedName>
        <fullName evidence="1">Large ribosomal subunit protein uL15</fullName>
    </recommendedName>
    <alternativeName>
        <fullName evidence="3">50S ribosomal protein L15</fullName>
    </alternativeName>
</protein>